<comment type="function">
    <text evidence="4">Salivary chemokine-binding protein which binds to host chemokines CXCL1, CXCL2, CXCL3, CXCL5, CXCL6, CXCL12 and CXCL13.</text>
</comment>
<comment type="subcellular location">
    <subcellularLocation>
        <location evidence="6">Secreted</location>
    </subcellularLocation>
</comment>
<keyword id="KW-1015">Disulfide bond</keyword>
<keyword id="KW-0325">Glycoprotein</keyword>
<keyword id="KW-0964">Secreted</keyword>
<keyword id="KW-0732">Signal</keyword>
<dbReference type="EMBL" id="GADI01004309">
    <property type="protein sequence ID" value="JAA69499.1"/>
    <property type="molecule type" value="mRNA"/>
</dbReference>
<dbReference type="SMR" id="A0A0K8RG61"/>
<dbReference type="GO" id="GO:0005576">
    <property type="term" value="C:extracellular region"/>
    <property type="evidence" value="ECO:0007669"/>
    <property type="project" value="UniProtKB-SubCell"/>
</dbReference>
<dbReference type="GO" id="GO:0019958">
    <property type="term" value="F:C-X-C chemokine binding"/>
    <property type="evidence" value="ECO:0000314"/>
    <property type="project" value="UniProtKB"/>
</dbReference>
<protein>
    <recommendedName>
        <fullName evidence="5">Evasin P1124</fullName>
    </recommendedName>
</protein>
<accession>A0A0K8RG61</accession>
<reference evidence="7" key="1">
    <citation type="journal article" date="2013" name="FASEB J.">
        <title>De novo Ixodes ricinus salivary gland transcriptome analysis using two next-generation sequencing methodologies.</title>
        <authorList>
            <person name="Schwarz A."/>
            <person name="von Reumont B.M."/>
            <person name="Erhart J."/>
            <person name="Chagas A.C."/>
            <person name="Ribeiro J.M."/>
            <person name="Kotsyfakis M."/>
        </authorList>
    </citation>
    <scope>NUCLEOTIDE SEQUENCE [LARGE SCALE MRNA]</scope>
    <source>
        <tissue evidence="7">Salivary gland</tissue>
    </source>
</reference>
<reference evidence="6" key="2">
    <citation type="journal article" date="2019" name="J. Biol. Chem.">
        <title>A knottin scaffold directs the CXC-chemokine-binding specificity of tick evasins.</title>
        <authorList>
            <person name="Lee A.W."/>
            <person name="Deruaz M."/>
            <person name="Lynch C."/>
            <person name="Davies G."/>
            <person name="Singh K."/>
            <person name="Alenazi Y."/>
            <person name="Eaton J.R.O."/>
            <person name="Kawamura A."/>
            <person name="Shaw J."/>
            <person name="Proudfoot A.E.I."/>
            <person name="Dias J.M."/>
            <person name="Bhattacharya S."/>
        </authorList>
    </citation>
    <scope>FUNCTION</scope>
</reference>
<feature type="signal peptide" evidence="2">
    <location>
        <begin position="1"/>
        <end position="28"/>
    </location>
</feature>
<feature type="chain" id="PRO_5005517756" description="Evasin P1124" evidence="2">
    <location>
        <begin position="29"/>
        <end position="83"/>
    </location>
</feature>
<feature type="glycosylation site" description="N-linked (GlcNAc...) asparagine" evidence="3">
    <location>
        <position position="51"/>
    </location>
</feature>
<feature type="disulfide bond" evidence="1">
    <location>
        <begin position="48"/>
        <end position="66"/>
    </location>
</feature>
<feature type="disulfide bond" evidence="1">
    <location>
        <begin position="52"/>
        <end position="68"/>
    </location>
</feature>
<feature type="disulfide bond" evidence="1">
    <location>
        <begin position="62"/>
        <end position="79"/>
    </location>
</feature>
<evidence type="ECO:0000250" key="1">
    <source>
        <dbReference type="UniProtKB" id="P0C8E8"/>
    </source>
</evidence>
<evidence type="ECO:0000255" key="2"/>
<evidence type="ECO:0000255" key="3">
    <source>
        <dbReference type="PROSITE-ProRule" id="PRU00498"/>
    </source>
</evidence>
<evidence type="ECO:0000269" key="4">
    <source>
    </source>
</evidence>
<evidence type="ECO:0000303" key="5">
    <source>
    </source>
</evidence>
<evidence type="ECO:0000305" key="6"/>
<evidence type="ECO:0000312" key="7">
    <source>
        <dbReference type="EMBL" id="JAA69499.1"/>
    </source>
</evidence>
<proteinExistence type="inferred from homology"/>
<sequence>MAVNVFTILQLAVFAAIVLNVNLHSVSADSKGTSDSQDSTKSIKVDFCETNCTKTDGGWTGCTGDCICVSVGDSIEGRCMDFG</sequence>
<name>E1124_IXORI</name>
<organism evidence="7">
    <name type="scientific">Ixodes ricinus</name>
    <name type="common">Common tick</name>
    <name type="synonym">Acarus ricinus</name>
    <dbReference type="NCBI Taxonomy" id="34613"/>
    <lineage>
        <taxon>Eukaryota</taxon>
        <taxon>Metazoa</taxon>
        <taxon>Ecdysozoa</taxon>
        <taxon>Arthropoda</taxon>
        <taxon>Chelicerata</taxon>
        <taxon>Arachnida</taxon>
        <taxon>Acari</taxon>
        <taxon>Parasitiformes</taxon>
        <taxon>Ixodida</taxon>
        <taxon>Ixodoidea</taxon>
        <taxon>Ixodidae</taxon>
        <taxon>Ixodinae</taxon>
        <taxon>Ixodes</taxon>
    </lineage>
</organism>